<gene>
    <name type="primary">cog2</name>
    <name type="ORF">DDB_G0281163</name>
</gene>
<proteinExistence type="inferred from homology"/>
<dbReference type="EMBL" id="AAFI02000040">
    <property type="protein sequence ID" value="EAL66878.1"/>
    <property type="molecule type" value="Genomic_DNA"/>
</dbReference>
<dbReference type="RefSeq" id="XP_640854.1">
    <property type="nucleotide sequence ID" value="XM_635762.1"/>
</dbReference>
<dbReference type="FunCoup" id="Q54UC2">
    <property type="interactions" value="759"/>
</dbReference>
<dbReference type="STRING" id="44689.Q54UC2"/>
<dbReference type="PaxDb" id="44689-DDB0237852"/>
<dbReference type="EnsemblProtists" id="EAL66878">
    <property type="protein sequence ID" value="EAL66878"/>
    <property type="gene ID" value="DDB_G0281163"/>
</dbReference>
<dbReference type="GeneID" id="8622910"/>
<dbReference type="KEGG" id="ddi:DDB_G0281163"/>
<dbReference type="dictyBase" id="DDB_G0281163">
    <property type="gene designation" value="cog2"/>
</dbReference>
<dbReference type="VEuPathDB" id="AmoebaDB:DDB_G0281163"/>
<dbReference type="eggNOG" id="KOG2307">
    <property type="taxonomic scope" value="Eukaryota"/>
</dbReference>
<dbReference type="HOGENOM" id="CLU_005470_1_0_1"/>
<dbReference type="InParanoid" id="Q54UC2"/>
<dbReference type="OMA" id="TFIDKCM"/>
<dbReference type="PhylomeDB" id="Q54UC2"/>
<dbReference type="Reactome" id="R-DDI-6807878">
    <property type="pathway name" value="COPI-mediated anterograde transport"/>
</dbReference>
<dbReference type="Reactome" id="R-DDI-6811438">
    <property type="pathway name" value="Intra-Golgi traffic"/>
</dbReference>
<dbReference type="PRO" id="PR:Q54UC2"/>
<dbReference type="Proteomes" id="UP000002195">
    <property type="component" value="Chromosome 3"/>
</dbReference>
<dbReference type="GO" id="GO:0000139">
    <property type="term" value="C:Golgi membrane"/>
    <property type="evidence" value="ECO:0007669"/>
    <property type="project" value="UniProtKB-SubCell"/>
</dbReference>
<dbReference type="GO" id="GO:0017119">
    <property type="term" value="C:Golgi transport complex"/>
    <property type="evidence" value="ECO:0000318"/>
    <property type="project" value="GO_Central"/>
</dbReference>
<dbReference type="GO" id="GO:0007030">
    <property type="term" value="P:Golgi organization"/>
    <property type="evidence" value="ECO:0000318"/>
    <property type="project" value="GO_Central"/>
</dbReference>
<dbReference type="GO" id="GO:0006891">
    <property type="term" value="P:intra-Golgi vesicle-mediated transport"/>
    <property type="evidence" value="ECO:0000318"/>
    <property type="project" value="GO_Central"/>
</dbReference>
<dbReference type="GO" id="GO:0015031">
    <property type="term" value="P:protein transport"/>
    <property type="evidence" value="ECO:0007669"/>
    <property type="project" value="UniProtKB-KW"/>
</dbReference>
<dbReference type="InterPro" id="IPR009316">
    <property type="entry name" value="COG2"/>
</dbReference>
<dbReference type="InterPro" id="IPR024603">
    <property type="entry name" value="COG_complex_COG2_C"/>
</dbReference>
<dbReference type="InterPro" id="IPR024602">
    <property type="entry name" value="COG_su2_N"/>
</dbReference>
<dbReference type="PANTHER" id="PTHR12961">
    <property type="entry name" value="CONSERVED OLIGOMERIC GOLGI COMPLEX COMPONENT 2"/>
    <property type="match status" value="1"/>
</dbReference>
<dbReference type="PANTHER" id="PTHR12961:SF0">
    <property type="entry name" value="CONSERVED OLIGOMERIC GOLGI COMPLEX SUBUNIT 2"/>
    <property type="match status" value="1"/>
</dbReference>
<dbReference type="Pfam" id="PF12022">
    <property type="entry name" value="COG2_C"/>
    <property type="match status" value="1"/>
</dbReference>
<dbReference type="Pfam" id="PF06148">
    <property type="entry name" value="COG2_N"/>
    <property type="match status" value="1"/>
</dbReference>
<feature type="chain" id="PRO_0000341681" description="Conserved oligomeric Golgi complex subunit 2">
    <location>
        <begin position="1"/>
        <end position="904"/>
    </location>
</feature>
<feature type="region of interest" description="Disordered" evidence="2">
    <location>
        <begin position="384"/>
        <end position="424"/>
    </location>
</feature>
<feature type="region of interest" description="Disordered" evidence="2">
    <location>
        <begin position="644"/>
        <end position="669"/>
    </location>
</feature>
<feature type="compositionally biased region" description="Low complexity" evidence="2">
    <location>
        <begin position="388"/>
        <end position="424"/>
    </location>
</feature>
<feature type="compositionally biased region" description="Low complexity" evidence="2">
    <location>
        <begin position="652"/>
        <end position="663"/>
    </location>
</feature>
<protein>
    <recommendedName>
        <fullName>Conserved oligomeric Golgi complex subunit 2</fullName>
        <shortName>COG complex subunit 2</shortName>
    </recommendedName>
    <alternativeName>
        <fullName>Component of oligomeric Golgi complex 2</fullName>
    </alternativeName>
</protein>
<organism>
    <name type="scientific">Dictyostelium discoideum</name>
    <name type="common">Social amoeba</name>
    <dbReference type="NCBI Taxonomy" id="44689"/>
    <lineage>
        <taxon>Eukaryota</taxon>
        <taxon>Amoebozoa</taxon>
        <taxon>Evosea</taxon>
        <taxon>Eumycetozoa</taxon>
        <taxon>Dictyostelia</taxon>
        <taxon>Dictyosteliales</taxon>
        <taxon>Dictyosteliaceae</taxon>
        <taxon>Dictyostelium</taxon>
    </lineage>
</organism>
<accession>Q54UC2</accession>
<evidence type="ECO:0000250" key="1"/>
<evidence type="ECO:0000256" key="2">
    <source>
        <dbReference type="SAM" id="MobiDB-lite"/>
    </source>
</evidence>
<evidence type="ECO:0000305" key="3"/>
<name>COG2_DICDI</name>
<sequence>MAMNLKNSSSGGNLTSSPSYNSFSSLNLSGNSFNNGSGSGSGSGSGSNEYIPLCFSKDVFTSNTFEVDQFISDCRKRVNLESVQKDLREYSKHLDSELIELINKEYQSFFSLSTSLVGFDTILNEFSISQSSIKSEIKSFNNEIVKVRGLVEDKLNEKKSIEQKKKLLQLYISISETLNNMNHLFDQLYQLTHPNDFKKINNNNNNHTNNETNINDGDVLELLIDRISNSFYQIQNQMSSLTNDELKFNIFQSLSLKIMDLSNKIEEKVEPIFKESLKRFINVNNNNKEIVDDNNEKQNKYDERILLVCLKTFQTIDKLNVPYKLFKTLIVKPRLAQIVSLRNLEINKSTTDGLSQIYNSIIEFLKNQCSSFFDISNLINNNLKEKQSNNNNNNNNNNNNNNNNNNNNQINNNSNNNNNNINNNNINNNYNNNIILYNNYNFISQSVLPEIDESLGFFKQIFATGIPDLFYKNYYLTFNFIQSIEVNFLTNKELLTQFRQSSSYSSLWKKWNFAVYFQLCFTNIAQHFEFNYLRIPLFDQLTLPTNNITNNNNNNNENNNEFYLKSTDGLRLSMDKCWSNSNFIFDLSSKFFKLFLQLIARYDTFISDTLIPLELELQQQLQQQQLQQQQQQQQQQQNIGDSVIKITPKSPPSLSNQSPISSSTTLNNKQSSPENFIYIISDIYKIKSKISTNYKELIIKTIGNHQNQHEILNLINDGILESCKTLEQLIPRISIIIENHLISKCLEPIEIISTLRSTYRMTNKPVPTKPSIYVSNLISPLEILINNKASSLHFIPPEIKLNWAISVLTPVTESFKNAATNLIQSVTQSNDIINKMVKKSKPTTTTSGGDMSDMDKISLQLYLDVDKFGLYIQKFGINLLTFEPFLGLKSIVEPFKKLILNQNK</sequence>
<keyword id="KW-0333">Golgi apparatus</keyword>
<keyword id="KW-0472">Membrane</keyword>
<keyword id="KW-0653">Protein transport</keyword>
<keyword id="KW-1185">Reference proteome</keyword>
<keyword id="KW-0813">Transport</keyword>
<reference key="1">
    <citation type="journal article" date="2005" name="Nature">
        <title>The genome of the social amoeba Dictyostelium discoideum.</title>
        <authorList>
            <person name="Eichinger L."/>
            <person name="Pachebat J.A."/>
            <person name="Gloeckner G."/>
            <person name="Rajandream M.A."/>
            <person name="Sucgang R."/>
            <person name="Berriman M."/>
            <person name="Song J."/>
            <person name="Olsen R."/>
            <person name="Szafranski K."/>
            <person name="Xu Q."/>
            <person name="Tunggal B."/>
            <person name="Kummerfeld S."/>
            <person name="Madera M."/>
            <person name="Konfortov B.A."/>
            <person name="Rivero F."/>
            <person name="Bankier A.T."/>
            <person name="Lehmann R."/>
            <person name="Hamlin N."/>
            <person name="Davies R."/>
            <person name="Gaudet P."/>
            <person name="Fey P."/>
            <person name="Pilcher K."/>
            <person name="Chen G."/>
            <person name="Saunders D."/>
            <person name="Sodergren E.J."/>
            <person name="Davis P."/>
            <person name="Kerhornou A."/>
            <person name="Nie X."/>
            <person name="Hall N."/>
            <person name="Anjard C."/>
            <person name="Hemphill L."/>
            <person name="Bason N."/>
            <person name="Farbrother P."/>
            <person name="Desany B."/>
            <person name="Just E."/>
            <person name="Morio T."/>
            <person name="Rost R."/>
            <person name="Churcher C.M."/>
            <person name="Cooper J."/>
            <person name="Haydock S."/>
            <person name="van Driessche N."/>
            <person name="Cronin A."/>
            <person name="Goodhead I."/>
            <person name="Muzny D.M."/>
            <person name="Mourier T."/>
            <person name="Pain A."/>
            <person name="Lu M."/>
            <person name="Harper D."/>
            <person name="Lindsay R."/>
            <person name="Hauser H."/>
            <person name="James K.D."/>
            <person name="Quiles M."/>
            <person name="Madan Babu M."/>
            <person name="Saito T."/>
            <person name="Buchrieser C."/>
            <person name="Wardroper A."/>
            <person name="Felder M."/>
            <person name="Thangavelu M."/>
            <person name="Johnson D."/>
            <person name="Knights A."/>
            <person name="Loulseged H."/>
            <person name="Mungall K.L."/>
            <person name="Oliver K."/>
            <person name="Price C."/>
            <person name="Quail M.A."/>
            <person name="Urushihara H."/>
            <person name="Hernandez J."/>
            <person name="Rabbinowitsch E."/>
            <person name="Steffen D."/>
            <person name="Sanders M."/>
            <person name="Ma J."/>
            <person name="Kohara Y."/>
            <person name="Sharp S."/>
            <person name="Simmonds M.N."/>
            <person name="Spiegler S."/>
            <person name="Tivey A."/>
            <person name="Sugano S."/>
            <person name="White B."/>
            <person name="Walker D."/>
            <person name="Woodward J.R."/>
            <person name="Winckler T."/>
            <person name="Tanaka Y."/>
            <person name="Shaulsky G."/>
            <person name="Schleicher M."/>
            <person name="Weinstock G.M."/>
            <person name="Rosenthal A."/>
            <person name="Cox E.C."/>
            <person name="Chisholm R.L."/>
            <person name="Gibbs R.A."/>
            <person name="Loomis W.F."/>
            <person name="Platzer M."/>
            <person name="Kay R.R."/>
            <person name="Williams J.G."/>
            <person name="Dear P.H."/>
            <person name="Noegel A.A."/>
            <person name="Barrell B.G."/>
            <person name="Kuspa A."/>
        </authorList>
    </citation>
    <scope>NUCLEOTIDE SEQUENCE [LARGE SCALE GENOMIC DNA]</scope>
    <source>
        <strain>AX4</strain>
    </source>
</reference>
<comment type="function">
    <text evidence="1">Required for normal Golgi function.</text>
</comment>
<comment type="subunit">
    <text evidence="1">Component of the conserved oligomeric Golgi complex which is composed of eight different subunits and is required for normal Golgi morphology and localization.</text>
</comment>
<comment type="subcellular location">
    <subcellularLocation>
        <location evidence="1">Golgi apparatus membrane</location>
        <topology evidence="1">Peripheral membrane protein</topology>
    </subcellularLocation>
</comment>
<comment type="similarity">
    <text evidence="3">Belongs to the COG2 family.</text>
</comment>